<gene>
    <name evidence="4" type="primary">rib2</name>
    <name type="ORF">SPCC4G3.16</name>
</gene>
<dbReference type="EC" id="3.5.4.26"/>
<dbReference type="EMBL" id="CU329672">
    <property type="protein sequence ID" value="CAB09771.1"/>
    <property type="molecule type" value="Genomic_DNA"/>
</dbReference>
<dbReference type="PIR" id="T41360">
    <property type="entry name" value="T41360"/>
</dbReference>
<dbReference type="RefSeq" id="NP_587822.1">
    <property type="nucleotide sequence ID" value="NM_001022815.2"/>
</dbReference>
<dbReference type="SMR" id="P87241"/>
<dbReference type="FunCoup" id="P87241">
    <property type="interactions" value="105"/>
</dbReference>
<dbReference type="STRING" id="284812.P87241"/>
<dbReference type="iPTMnet" id="P87241"/>
<dbReference type="PaxDb" id="4896-SPCC4G3.16.1"/>
<dbReference type="EnsemblFungi" id="SPCC4G3.16.1">
    <property type="protein sequence ID" value="SPCC4G3.16.1:pep"/>
    <property type="gene ID" value="SPCC4G3.16"/>
</dbReference>
<dbReference type="GeneID" id="2539515"/>
<dbReference type="KEGG" id="spo:2539515"/>
<dbReference type="PomBase" id="SPCC4G3.16">
    <property type="gene designation" value="rib2"/>
</dbReference>
<dbReference type="VEuPathDB" id="FungiDB:SPCC4G3.16"/>
<dbReference type="eggNOG" id="KOG1018">
    <property type="taxonomic scope" value="Eukaryota"/>
</dbReference>
<dbReference type="HOGENOM" id="CLU_698602_0_0_1"/>
<dbReference type="InParanoid" id="P87241"/>
<dbReference type="OMA" id="KKCEPTD"/>
<dbReference type="PhylomeDB" id="P87241"/>
<dbReference type="UniPathway" id="UPA00275">
    <property type="reaction ID" value="UER00401"/>
</dbReference>
<dbReference type="PRO" id="PR:P87241"/>
<dbReference type="Proteomes" id="UP000002485">
    <property type="component" value="Chromosome III"/>
</dbReference>
<dbReference type="GO" id="GO:0005829">
    <property type="term" value="C:cytosol"/>
    <property type="evidence" value="ECO:0007005"/>
    <property type="project" value="PomBase"/>
</dbReference>
<dbReference type="GO" id="GO:0005739">
    <property type="term" value="C:mitochondrion"/>
    <property type="evidence" value="ECO:0000266"/>
    <property type="project" value="PomBase"/>
</dbReference>
<dbReference type="GO" id="GO:0005634">
    <property type="term" value="C:nucleus"/>
    <property type="evidence" value="ECO:0007005"/>
    <property type="project" value="PomBase"/>
</dbReference>
<dbReference type="GO" id="GO:0008835">
    <property type="term" value="F:diaminohydroxyphosphoribosylaminopyrimidine deaminase activity"/>
    <property type="evidence" value="ECO:0007669"/>
    <property type="project" value="UniProtKB-EC"/>
</dbReference>
<dbReference type="GO" id="GO:0046872">
    <property type="term" value="F:metal ion binding"/>
    <property type="evidence" value="ECO:0007669"/>
    <property type="project" value="UniProtKB-KW"/>
</dbReference>
<dbReference type="GO" id="GO:0008276">
    <property type="term" value="F:protein methyltransferase activity"/>
    <property type="evidence" value="ECO:0000318"/>
    <property type="project" value="GO_Central"/>
</dbReference>
<dbReference type="GO" id="GO:0008757">
    <property type="term" value="F:S-adenosylmethionine-dependent methyltransferase activity"/>
    <property type="evidence" value="ECO:0007669"/>
    <property type="project" value="UniProtKB-ARBA"/>
</dbReference>
<dbReference type="GO" id="GO:0006139">
    <property type="term" value="P:nucleobase-containing compound metabolic process"/>
    <property type="evidence" value="ECO:0007669"/>
    <property type="project" value="UniProtKB-ARBA"/>
</dbReference>
<dbReference type="GO" id="GO:0009231">
    <property type="term" value="P:riboflavin biosynthetic process"/>
    <property type="evidence" value="ECO:0000266"/>
    <property type="project" value="PomBase"/>
</dbReference>
<dbReference type="CDD" id="cd01284">
    <property type="entry name" value="Riboflavin_deaminase-reductase"/>
    <property type="match status" value="1"/>
</dbReference>
<dbReference type="Gene3D" id="3.40.140.10">
    <property type="entry name" value="Cytidine Deaminase, domain 2"/>
    <property type="match status" value="1"/>
</dbReference>
<dbReference type="Gene3D" id="3.40.50.150">
    <property type="entry name" value="Vaccinia Virus protein VP39"/>
    <property type="match status" value="1"/>
</dbReference>
<dbReference type="InterPro" id="IPR002125">
    <property type="entry name" value="CMP_dCMP_dom"/>
</dbReference>
<dbReference type="InterPro" id="IPR016193">
    <property type="entry name" value="Cytidine_deaminase-like"/>
</dbReference>
<dbReference type="InterPro" id="IPR019410">
    <property type="entry name" value="Methyltransf_16"/>
</dbReference>
<dbReference type="InterPro" id="IPR029063">
    <property type="entry name" value="SAM-dependent_MTases_sf"/>
</dbReference>
<dbReference type="PANTHER" id="PTHR14614">
    <property type="entry name" value="HEPATOCELLULAR CARCINOMA-ASSOCIATED ANTIGEN"/>
    <property type="match status" value="1"/>
</dbReference>
<dbReference type="PANTHER" id="PTHR14614:SF132">
    <property type="entry name" value="PROTEIN-LYSINE METHYLTRANSFERASE C42C1.13"/>
    <property type="match status" value="1"/>
</dbReference>
<dbReference type="Pfam" id="PF00383">
    <property type="entry name" value="dCMP_cyt_deam_1"/>
    <property type="match status" value="1"/>
</dbReference>
<dbReference type="Pfam" id="PF10294">
    <property type="entry name" value="Methyltransf_16"/>
    <property type="match status" value="1"/>
</dbReference>
<dbReference type="SUPFAM" id="SSF53927">
    <property type="entry name" value="Cytidine deaminase-like"/>
    <property type="match status" value="1"/>
</dbReference>
<dbReference type="SUPFAM" id="SSF53335">
    <property type="entry name" value="S-adenosyl-L-methionine-dependent methyltransferases"/>
    <property type="match status" value="1"/>
</dbReference>
<dbReference type="PROSITE" id="PS51747">
    <property type="entry name" value="CYT_DCMP_DEAMINASES_2"/>
    <property type="match status" value="1"/>
</dbReference>
<comment type="function">
    <text evidence="4">Involved in riboflavin biosynthesis. Converts 2,5-diamino-6-(ribosylamino)-4(3H)-pyrimidinone 5'-phosphate into 5-amino-6-(ribosylamino)-2,4(1H,3H)-pyrimidinedione 5'-phosphate (By similarity).</text>
</comment>
<comment type="catalytic activity">
    <reaction evidence="2">
        <text>2,5-diamino-6-hydroxy-4-(5-phosphoribosylamino)-pyrimidine + H2O + H(+) = 5-amino-6-(5-phospho-D-ribosylamino)uracil + NH4(+)</text>
        <dbReference type="Rhea" id="RHEA:21868"/>
        <dbReference type="ChEBI" id="CHEBI:15377"/>
        <dbReference type="ChEBI" id="CHEBI:15378"/>
        <dbReference type="ChEBI" id="CHEBI:28938"/>
        <dbReference type="ChEBI" id="CHEBI:58453"/>
        <dbReference type="ChEBI" id="CHEBI:58614"/>
        <dbReference type="EC" id="3.5.4.26"/>
    </reaction>
</comment>
<comment type="cofactor">
    <cofactor evidence="1">
        <name>Zn(2+)</name>
        <dbReference type="ChEBI" id="CHEBI:29105"/>
    </cofactor>
    <text evidence="1">Binds 1 zinc ion.</text>
</comment>
<comment type="pathway">
    <text>Cofactor biosynthesis; riboflavin biosynthesis; 5-amino-6-(D-ribitylamino)uracil from GTP: step 2/4.</text>
</comment>
<comment type="subcellular location">
    <subcellularLocation>
        <location evidence="7">Cytoplasm</location>
    </subcellularLocation>
    <subcellularLocation>
        <location evidence="7">Nucleus</location>
    </subcellularLocation>
</comment>
<comment type="similarity">
    <text evidence="5">Belongs to the cytidine and deoxycytidylate deaminase family.</text>
</comment>
<reference evidence="9" key="1">
    <citation type="journal article" date="2002" name="Nature">
        <title>The genome sequence of Schizosaccharomyces pombe.</title>
        <authorList>
            <person name="Wood V."/>
            <person name="Gwilliam R."/>
            <person name="Rajandream M.A."/>
            <person name="Lyne M.H."/>
            <person name="Lyne R."/>
            <person name="Stewart A."/>
            <person name="Sgouros J.G."/>
            <person name="Peat N."/>
            <person name="Hayles J."/>
            <person name="Baker S.G."/>
            <person name="Basham D."/>
            <person name="Bowman S."/>
            <person name="Brooks K."/>
            <person name="Brown D."/>
            <person name="Brown S."/>
            <person name="Chillingworth T."/>
            <person name="Churcher C.M."/>
            <person name="Collins M."/>
            <person name="Connor R."/>
            <person name="Cronin A."/>
            <person name="Davis P."/>
            <person name="Feltwell T."/>
            <person name="Fraser A."/>
            <person name="Gentles S."/>
            <person name="Goble A."/>
            <person name="Hamlin N."/>
            <person name="Harris D.E."/>
            <person name="Hidalgo J."/>
            <person name="Hodgson G."/>
            <person name="Holroyd S."/>
            <person name="Hornsby T."/>
            <person name="Howarth S."/>
            <person name="Huckle E.J."/>
            <person name="Hunt S."/>
            <person name="Jagels K."/>
            <person name="James K.D."/>
            <person name="Jones L."/>
            <person name="Jones M."/>
            <person name="Leather S."/>
            <person name="McDonald S."/>
            <person name="McLean J."/>
            <person name="Mooney P."/>
            <person name="Moule S."/>
            <person name="Mungall K.L."/>
            <person name="Murphy L.D."/>
            <person name="Niblett D."/>
            <person name="Odell C."/>
            <person name="Oliver K."/>
            <person name="O'Neil S."/>
            <person name="Pearson D."/>
            <person name="Quail M.A."/>
            <person name="Rabbinowitsch E."/>
            <person name="Rutherford K.M."/>
            <person name="Rutter S."/>
            <person name="Saunders D."/>
            <person name="Seeger K."/>
            <person name="Sharp S."/>
            <person name="Skelton J."/>
            <person name="Simmonds M.N."/>
            <person name="Squares R."/>
            <person name="Squares S."/>
            <person name="Stevens K."/>
            <person name="Taylor K."/>
            <person name="Taylor R.G."/>
            <person name="Tivey A."/>
            <person name="Walsh S.V."/>
            <person name="Warren T."/>
            <person name="Whitehead S."/>
            <person name="Woodward J.R."/>
            <person name="Volckaert G."/>
            <person name="Aert R."/>
            <person name="Robben J."/>
            <person name="Grymonprez B."/>
            <person name="Weltjens I."/>
            <person name="Vanstreels E."/>
            <person name="Rieger M."/>
            <person name="Schaefer M."/>
            <person name="Mueller-Auer S."/>
            <person name="Gabel C."/>
            <person name="Fuchs M."/>
            <person name="Duesterhoeft A."/>
            <person name="Fritzc C."/>
            <person name="Holzer E."/>
            <person name="Moestl D."/>
            <person name="Hilbert H."/>
            <person name="Borzym K."/>
            <person name="Langer I."/>
            <person name="Beck A."/>
            <person name="Lehrach H."/>
            <person name="Reinhardt R."/>
            <person name="Pohl T.M."/>
            <person name="Eger P."/>
            <person name="Zimmermann W."/>
            <person name="Wedler H."/>
            <person name="Wambutt R."/>
            <person name="Purnelle B."/>
            <person name="Goffeau A."/>
            <person name="Cadieu E."/>
            <person name="Dreano S."/>
            <person name="Gloux S."/>
            <person name="Lelaure V."/>
            <person name="Mottier S."/>
            <person name="Galibert F."/>
            <person name="Aves S.J."/>
            <person name="Xiang Z."/>
            <person name="Hunt C."/>
            <person name="Moore K."/>
            <person name="Hurst S.M."/>
            <person name="Lucas M."/>
            <person name="Rochet M."/>
            <person name="Gaillardin C."/>
            <person name="Tallada V.A."/>
            <person name="Garzon A."/>
            <person name="Thode G."/>
            <person name="Daga R.R."/>
            <person name="Cruzado L."/>
            <person name="Jimenez J."/>
            <person name="Sanchez M."/>
            <person name="del Rey F."/>
            <person name="Benito J."/>
            <person name="Dominguez A."/>
            <person name="Revuelta J.L."/>
            <person name="Moreno S."/>
            <person name="Armstrong J."/>
            <person name="Forsburg S.L."/>
            <person name="Cerutti L."/>
            <person name="Lowe T."/>
            <person name="McCombie W.R."/>
            <person name="Paulsen I."/>
            <person name="Potashkin J."/>
            <person name="Shpakovski G.V."/>
            <person name="Ussery D."/>
            <person name="Barrell B.G."/>
            <person name="Nurse P."/>
        </authorList>
    </citation>
    <scope>NUCLEOTIDE SEQUENCE [LARGE SCALE GENOMIC DNA]</scope>
    <source>
        <strain>972 / ATCC 24843</strain>
    </source>
</reference>
<reference evidence="8" key="2">
    <citation type="journal article" date="2006" name="Nat. Biotechnol.">
        <title>ORFeome cloning and global analysis of protein localization in the fission yeast Schizosaccharomyces pombe.</title>
        <authorList>
            <person name="Matsuyama A."/>
            <person name="Arai R."/>
            <person name="Yashiroda Y."/>
            <person name="Shirai A."/>
            <person name="Kamata A."/>
            <person name="Sekido S."/>
            <person name="Kobayashi Y."/>
            <person name="Hashimoto A."/>
            <person name="Hamamoto M."/>
            <person name="Hiraoka Y."/>
            <person name="Horinouchi S."/>
            <person name="Yoshida M."/>
        </authorList>
    </citation>
    <scope>SUBCELLULAR LOCATION [LARGE SCALE ANALYSIS]</scope>
</reference>
<keyword id="KW-0963">Cytoplasm</keyword>
<keyword id="KW-0378">Hydrolase</keyword>
<keyword id="KW-0479">Metal-binding</keyword>
<keyword id="KW-0539">Nucleus</keyword>
<keyword id="KW-1185">Reference proteome</keyword>
<keyword id="KW-0686">Riboflavin biosynthesis</keyword>
<keyword id="KW-0862">Zinc</keyword>
<proteinExistence type="inferred from homology"/>
<evidence type="ECO:0000250" key="1"/>
<evidence type="ECO:0000250" key="2">
    <source>
        <dbReference type="UniProtKB" id="O66534"/>
    </source>
</evidence>
<evidence type="ECO:0000250" key="3">
    <source>
        <dbReference type="UniProtKB" id="Q12178"/>
    </source>
</evidence>
<evidence type="ECO:0000250" key="4">
    <source>
        <dbReference type="UniProtKB" id="Q12362"/>
    </source>
</evidence>
<evidence type="ECO:0000255" key="5"/>
<evidence type="ECO:0000255" key="6">
    <source>
        <dbReference type="PROSITE-ProRule" id="PRU01083"/>
    </source>
</evidence>
<evidence type="ECO:0000269" key="7">
    <source>
    </source>
</evidence>
<evidence type="ECO:0000305" key="8"/>
<evidence type="ECO:0000312" key="9">
    <source>
        <dbReference type="EMBL" id="CAB09771.1"/>
    </source>
</evidence>
<feature type="chain" id="PRO_0000310862" description="Diaminohydroxyphosphoribosylamino-pyrimidine deaminase">
    <location>
        <begin position="1"/>
        <end position="405"/>
    </location>
</feature>
<feature type="domain" description="CMP/dCMP-type deaminase" evidence="6">
    <location>
        <begin position="256"/>
        <end position="383"/>
    </location>
</feature>
<feature type="active site" description="Proton donor" evidence="3">
    <location>
        <position position="307"/>
    </location>
</feature>
<feature type="binding site" evidence="1">
    <location>
        <position position="305"/>
    </location>
    <ligand>
        <name>Zn(2+)</name>
        <dbReference type="ChEBI" id="CHEBI:29105"/>
        <note>catalytic</note>
    </ligand>
</feature>
<feature type="binding site" evidence="1">
    <location>
        <position position="335"/>
    </location>
    <ligand>
        <name>Zn(2+)</name>
        <dbReference type="ChEBI" id="CHEBI:29105"/>
        <note>catalytic</note>
    </ligand>
</feature>
<feature type="binding site" evidence="1">
    <location>
        <position position="345"/>
    </location>
    <ligand>
        <name>Zn(2+)</name>
        <dbReference type="ChEBI" id="CHEBI:29105"/>
        <note>catalytic</note>
    </ligand>
</feature>
<protein>
    <recommendedName>
        <fullName>Diaminohydroxyphosphoribosylamino-pyrimidine deaminase</fullName>
        <shortName>DRAP deaminase</shortName>
        <ecNumber>3.5.4.26</ecNumber>
    </recommendedName>
    <alternativeName>
        <fullName>Riboflavin-specific deaminase</fullName>
    </alternativeName>
</protein>
<sequence length="405" mass="45605">MQIPEKYLSSVDNVEEETQILFALSKQKDADLGMLDSKQEQIALTIGNKPIKVKQSLQSLHQSRGSTGSVLWKTSVKVVPWLLQQSWFMNSLTPKTSILELGSGISGLAGILLSPFVGNYVASDKQLYLKKIRENLDQNNASDVEVHELDWKSTPYPKDWTFDFLDYVLFFDCIYNPHLNAHLVSCLASLAERYPGMQCLFAQELRDQETLVDFLERVRPYFEVDLIKMEEINKTSVASSTNLPPANMSLFIMKPYNHEEYMLKALNEAKKCEPTDSAFCVGAVIVQNGKIVSTGYSRERPGNTHAEECAIEKFMLKNPTDSLEGAIMYSTMEPCSKRLSKKVSCTDLIVKQKFSTVVLGSLEPDIFVKCEGVDLLKKAGIVVIEKLTFQDDCLREAVRGHPPKH</sequence>
<organism>
    <name type="scientific">Schizosaccharomyces pombe (strain 972 / ATCC 24843)</name>
    <name type="common">Fission yeast</name>
    <dbReference type="NCBI Taxonomy" id="284812"/>
    <lineage>
        <taxon>Eukaryota</taxon>
        <taxon>Fungi</taxon>
        <taxon>Dikarya</taxon>
        <taxon>Ascomycota</taxon>
        <taxon>Taphrinomycotina</taxon>
        <taxon>Schizosaccharomycetes</taxon>
        <taxon>Schizosaccharomycetales</taxon>
        <taxon>Schizosaccharomycetaceae</taxon>
        <taxon>Schizosaccharomyces</taxon>
    </lineage>
</organism>
<name>RIB2_SCHPO</name>
<accession>P87241</accession>